<protein>
    <recommendedName>
        <fullName evidence="2">Ubiquitin carboxyl-terminal hydrolase 3</fullName>
        <ecNumber evidence="3">3.4.19.12</ecNumber>
    </recommendedName>
</protein>
<keyword id="KW-0378">Hydrolase</keyword>
<keyword id="KW-0645">Protease</keyword>
<keyword id="KW-1185">Reference proteome</keyword>
<keyword id="KW-0788">Thiol protease</keyword>
<keyword id="KW-0833">Ubl conjugation pathway</keyword>
<sequence length="234" mass="25712">MATASESSSSKRWLPLESNPDVMNQYLWGLGLAPDEAECNDVYGLDDELLEMVPKPVLAVLFLYPITKKSEEERIEQDKEIKEKVHSDKVYFMKQTVGNACGTIGLLHAIGNITSEIKLSDGSFLDRFFKSTANMTPMERAKFLENDSQIEDAHSVAVIAGDTPASEDADTHFICLACVEGELYELDGRKAGPISHGASSPATLLKDATKVIKKMIEKNPGSLNFNLIAISKRT</sequence>
<feature type="chain" id="PRO_0000435408" description="Ubiquitin carboxyl-terminal hydrolase 3">
    <location>
        <begin position="1"/>
        <end position="234"/>
    </location>
</feature>
<feature type="domain" description="UCH catalytic" evidence="1">
    <location>
        <begin position="12"/>
        <end position="232"/>
    </location>
</feature>
<feature type="active site" description="Nucleophile" evidence="1">
    <location>
        <position position="101"/>
    </location>
</feature>
<feature type="active site" description="Proton donor" evidence="1">
    <location>
        <position position="172"/>
    </location>
</feature>
<feature type="site" description="Transition state stabilizer" evidence="1">
    <location>
        <position position="95"/>
    </location>
</feature>
<feature type="site" description="Important for enzyme activity" evidence="1">
    <location>
        <position position="187"/>
    </location>
</feature>
<gene>
    <name evidence="2" type="primary">UCH3</name>
    <name evidence="4 5" type="ordered locus">At4g17510</name>
    <name evidence="7" type="ORF">dl4790c</name>
</gene>
<reference key="1">
    <citation type="journal article" date="1998" name="Nature">
        <title>Analysis of 1.9 Mb of contiguous sequence from chromosome 4 of Arabidopsis thaliana.</title>
        <authorList>
            <person name="Bevan M."/>
            <person name="Bancroft I."/>
            <person name="Bent E."/>
            <person name="Love K."/>
            <person name="Goodman H.M."/>
            <person name="Dean C."/>
            <person name="Bergkamp R."/>
            <person name="Dirkse W."/>
            <person name="van Staveren M."/>
            <person name="Stiekema W."/>
            <person name="Drost L."/>
            <person name="Ridley P."/>
            <person name="Hudson S.-A."/>
            <person name="Patel K."/>
            <person name="Murphy G."/>
            <person name="Piffanelli P."/>
            <person name="Wedler H."/>
            <person name="Wedler E."/>
            <person name="Wambutt R."/>
            <person name="Weitzenegger T."/>
            <person name="Pohl T."/>
            <person name="Terryn N."/>
            <person name="Gielen J."/>
            <person name="Villarroel R."/>
            <person name="De Clercq R."/>
            <person name="van Montagu M."/>
            <person name="Lecharny A."/>
            <person name="Aubourg S."/>
            <person name="Gy I."/>
            <person name="Kreis M."/>
            <person name="Lao N."/>
            <person name="Kavanagh T."/>
            <person name="Hempel S."/>
            <person name="Kotter P."/>
            <person name="Entian K.-D."/>
            <person name="Rieger M."/>
            <person name="Schaefer M."/>
            <person name="Funk B."/>
            <person name="Mueller-Auer S."/>
            <person name="Silvey M."/>
            <person name="James R."/>
            <person name="Monfort A."/>
            <person name="Pons A."/>
            <person name="Puigdomenech P."/>
            <person name="Douka A."/>
            <person name="Voukelatou E."/>
            <person name="Milioni D."/>
            <person name="Hatzopoulos P."/>
            <person name="Piravandi E."/>
            <person name="Obermaier B."/>
            <person name="Hilbert H."/>
            <person name="Duesterhoeft A."/>
            <person name="Moores T."/>
            <person name="Jones J.D.G."/>
            <person name="Eneva T."/>
            <person name="Palme K."/>
            <person name="Benes V."/>
            <person name="Rechmann S."/>
            <person name="Ansorge W."/>
            <person name="Cooke R."/>
            <person name="Berger C."/>
            <person name="Delseny M."/>
            <person name="Voet M."/>
            <person name="Volckaert G."/>
            <person name="Mewes H.-W."/>
            <person name="Klosterman S."/>
            <person name="Schueller C."/>
            <person name="Chalwatzis N."/>
        </authorList>
    </citation>
    <scope>NUCLEOTIDE SEQUENCE [LARGE SCALE GENOMIC DNA]</scope>
    <source>
        <strain>cv. Columbia</strain>
    </source>
</reference>
<reference key="2">
    <citation type="journal article" date="1999" name="Nature">
        <title>Sequence and analysis of chromosome 4 of the plant Arabidopsis thaliana.</title>
        <authorList>
            <person name="Mayer K.F.X."/>
            <person name="Schueller C."/>
            <person name="Wambutt R."/>
            <person name="Murphy G."/>
            <person name="Volckaert G."/>
            <person name="Pohl T."/>
            <person name="Duesterhoeft A."/>
            <person name="Stiekema W."/>
            <person name="Entian K.-D."/>
            <person name="Terryn N."/>
            <person name="Harris B."/>
            <person name="Ansorge W."/>
            <person name="Brandt P."/>
            <person name="Grivell L.A."/>
            <person name="Rieger M."/>
            <person name="Weichselgartner M."/>
            <person name="de Simone V."/>
            <person name="Obermaier B."/>
            <person name="Mache R."/>
            <person name="Mueller M."/>
            <person name="Kreis M."/>
            <person name="Delseny M."/>
            <person name="Puigdomenech P."/>
            <person name="Watson M."/>
            <person name="Schmidtheini T."/>
            <person name="Reichert B."/>
            <person name="Portetelle D."/>
            <person name="Perez-Alonso M."/>
            <person name="Boutry M."/>
            <person name="Bancroft I."/>
            <person name="Vos P."/>
            <person name="Hoheisel J."/>
            <person name="Zimmermann W."/>
            <person name="Wedler H."/>
            <person name="Ridley P."/>
            <person name="Langham S.-A."/>
            <person name="McCullagh B."/>
            <person name="Bilham L."/>
            <person name="Robben J."/>
            <person name="van der Schueren J."/>
            <person name="Grymonprez B."/>
            <person name="Chuang Y.-J."/>
            <person name="Vandenbussche F."/>
            <person name="Braeken M."/>
            <person name="Weltjens I."/>
            <person name="Voet M."/>
            <person name="Bastiaens I."/>
            <person name="Aert R."/>
            <person name="Defoor E."/>
            <person name="Weitzenegger T."/>
            <person name="Bothe G."/>
            <person name="Ramsperger U."/>
            <person name="Hilbert H."/>
            <person name="Braun M."/>
            <person name="Holzer E."/>
            <person name="Brandt A."/>
            <person name="Peters S."/>
            <person name="van Staveren M."/>
            <person name="Dirkse W."/>
            <person name="Mooijman P."/>
            <person name="Klein Lankhorst R."/>
            <person name="Rose M."/>
            <person name="Hauf J."/>
            <person name="Koetter P."/>
            <person name="Berneiser S."/>
            <person name="Hempel S."/>
            <person name="Feldpausch M."/>
            <person name="Lamberth S."/>
            <person name="Van den Daele H."/>
            <person name="De Keyser A."/>
            <person name="Buysshaert C."/>
            <person name="Gielen J."/>
            <person name="Villarroel R."/>
            <person name="De Clercq R."/>
            <person name="van Montagu M."/>
            <person name="Rogers J."/>
            <person name="Cronin A."/>
            <person name="Quail M.A."/>
            <person name="Bray-Allen S."/>
            <person name="Clark L."/>
            <person name="Doggett J."/>
            <person name="Hall S."/>
            <person name="Kay M."/>
            <person name="Lennard N."/>
            <person name="McLay K."/>
            <person name="Mayes R."/>
            <person name="Pettett A."/>
            <person name="Rajandream M.A."/>
            <person name="Lyne M."/>
            <person name="Benes V."/>
            <person name="Rechmann S."/>
            <person name="Borkova D."/>
            <person name="Bloecker H."/>
            <person name="Scharfe M."/>
            <person name="Grimm M."/>
            <person name="Loehnert T.-H."/>
            <person name="Dose S."/>
            <person name="de Haan M."/>
            <person name="Maarse A.C."/>
            <person name="Schaefer M."/>
            <person name="Mueller-Auer S."/>
            <person name="Gabel C."/>
            <person name="Fuchs M."/>
            <person name="Fartmann B."/>
            <person name="Granderath K."/>
            <person name="Dauner D."/>
            <person name="Herzl A."/>
            <person name="Neumann S."/>
            <person name="Argiriou A."/>
            <person name="Vitale D."/>
            <person name="Liguori R."/>
            <person name="Piravandi E."/>
            <person name="Massenet O."/>
            <person name="Quigley F."/>
            <person name="Clabauld G."/>
            <person name="Muendlein A."/>
            <person name="Felber R."/>
            <person name="Schnabl S."/>
            <person name="Hiller R."/>
            <person name="Schmidt W."/>
            <person name="Lecharny A."/>
            <person name="Aubourg S."/>
            <person name="Chefdor F."/>
            <person name="Cooke R."/>
            <person name="Berger C."/>
            <person name="Monfort A."/>
            <person name="Casacuberta E."/>
            <person name="Gibbons T."/>
            <person name="Weber N."/>
            <person name="Vandenbol M."/>
            <person name="Bargues M."/>
            <person name="Terol J."/>
            <person name="Torres A."/>
            <person name="Perez-Perez A."/>
            <person name="Purnelle B."/>
            <person name="Bent E."/>
            <person name="Johnson S."/>
            <person name="Tacon D."/>
            <person name="Jesse T."/>
            <person name="Heijnen L."/>
            <person name="Schwarz S."/>
            <person name="Scholler P."/>
            <person name="Heber S."/>
            <person name="Francs P."/>
            <person name="Bielke C."/>
            <person name="Frishman D."/>
            <person name="Haase D."/>
            <person name="Lemcke K."/>
            <person name="Mewes H.-W."/>
            <person name="Stocker S."/>
            <person name="Zaccaria P."/>
            <person name="Bevan M."/>
            <person name="Wilson R.K."/>
            <person name="de la Bastide M."/>
            <person name="Habermann K."/>
            <person name="Parnell L."/>
            <person name="Dedhia N."/>
            <person name="Gnoj L."/>
            <person name="Schutz K."/>
            <person name="Huang E."/>
            <person name="Spiegel L."/>
            <person name="Sekhon M."/>
            <person name="Murray J."/>
            <person name="Sheet P."/>
            <person name="Cordes M."/>
            <person name="Abu-Threideh J."/>
            <person name="Stoneking T."/>
            <person name="Kalicki J."/>
            <person name="Graves T."/>
            <person name="Harmon G."/>
            <person name="Edwards J."/>
            <person name="Latreille P."/>
            <person name="Courtney L."/>
            <person name="Cloud J."/>
            <person name="Abbott A."/>
            <person name="Scott K."/>
            <person name="Johnson D."/>
            <person name="Minx P."/>
            <person name="Bentley D."/>
            <person name="Fulton B."/>
            <person name="Miller N."/>
            <person name="Greco T."/>
            <person name="Kemp K."/>
            <person name="Kramer J."/>
            <person name="Fulton L."/>
            <person name="Mardis E."/>
            <person name="Dante M."/>
            <person name="Pepin K."/>
            <person name="Hillier L.W."/>
            <person name="Nelson J."/>
            <person name="Spieth J."/>
            <person name="Ryan E."/>
            <person name="Andrews S."/>
            <person name="Geisel C."/>
            <person name="Layman D."/>
            <person name="Du H."/>
            <person name="Ali J."/>
            <person name="Berghoff A."/>
            <person name="Jones K."/>
            <person name="Drone K."/>
            <person name="Cotton M."/>
            <person name="Joshu C."/>
            <person name="Antonoiu B."/>
            <person name="Zidanic M."/>
            <person name="Strong C."/>
            <person name="Sun H."/>
            <person name="Lamar B."/>
            <person name="Yordan C."/>
            <person name="Ma P."/>
            <person name="Zhong J."/>
            <person name="Preston R."/>
            <person name="Vil D."/>
            <person name="Shekher M."/>
            <person name="Matero A."/>
            <person name="Shah R."/>
            <person name="Swaby I.K."/>
            <person name="O'Shaughnessy A."/>
            <person name="Rodriguez M."/>
            <person name="Hoffman J."/>
            <person name="Till S."/>
            <person name="Granat S."/>
            <person name="Shohdy N."/>
            <person name="Hasegawa A."/>
            <person name="Hameed A."/>
            <person name="Lodhi M."/>
            <person name="Johnson A."/>
            <person name="Chen E."/>
            <person name="Marra M.A."/>
            <person name="Martienssen R."/>
            <person name="McCombie W.R."/>
        </authorList>
    </citation>
    <scope>NUCLEOTIDE SEQUENCE [LARGE SCALE GENOMIC DNA]</scope>
    <source>
        <strain>cv. Columbia</strain>
    </source>
</reference>
<reference key="3">
    <citation type="journal article" date="2017" name="Plant J.">
        <title>Araport11: a complete reannotation of the Arabidopsis thaliana reference genome.</title>
        <authorList>
            <person name="Cheng C.Y."/>
            <person name="Krishnakumar V."/>
            <person name="Chan A.P."/>
            <person name="Thibaud-Nissen F."/>
            <person name="Schobel S."/>
            <person name="Town C.D."/>
        </authorList>
    </citation>
    <scope>GENOME REANNOTATION</scope>
    <source>
        <strain>cv. Columbia</strain>
    </source>
</reference>
<reference key="4">
    <citation type="journal article" date="2002" name="Science">
        <title>Functional annotation of a full-length Arabidopsis cDNA collection.</title>
        <authorList>
            <person name="Seki M."/>
            <person name="Narusaka M."/>
            <person name="Kamiya A."/>
            <person name="Ishida J."/>
            <person name="Satou M."/>
            <person name="Sakurai T."/>
            <person name="Nakajima M."/>
            <person name="Enju A."/>
            <person name="Akiyama K."/>
            <person name="Oono Y."/>
            <person name="Muramatsu M."/>
            <person name="Hayashizaki Y."/>
            <person name="Kawai J."/>
            <person name="Carninci P."/>
            <person name="Itoh M."/>
            <person name="Ishii Y."/>
            <person name="Arakawa T."/>
            <person name="Shibata K."/>
            <person name="Shinagawa A."/>
            <person name="Shinozaki K."/>
        </authorList>
    </citation>
    <scope>NUCLEOTIDE SEQUENCE [LARGE SCALE MRNA]</scope>
    <source>
        <strain>cv. Columbia</strain>
    </source>
</reference>
<reference key="5">
    <citation type="journal article" date="2003" name="Science">
        <title>Empirical analysis of transcriptional activity in the Arabidopsis genome.</title>
        <authorList>
            <person name="Yamada K."/>
            <person name="Lim J."/>
            <person name="Dale J.M."/>
            <person name="Chen H."/>
            <person name="Shinn P."/>
            <person name="Palm C.J."/>
            <person name="Southwick A.M."/>
            <person name="Wu H.C."/>
            <person name="Kim C.J."/>
            <person name="Nguyen M."/>
            <person name="Pham P.K."/>
            <person name="Cheuk R.F."/>
            <person name="Karlin-Newmann G."/>
            <person name="Liu S.X."/>
            <person name="Lam B."/>
            <person name="Sakano H."/>
            <person name="Wu T."/>
            <person name="Yu G."/>
            <person name="Miranda M."/>
            <person name="Quach H.L."/>
            <person name="Tripp M."/>
            <person name="Chang C.H."/>
            <person name="Lee J.M."/>
            <person name="Toriumi M.J."/>
            <person name="Chan M.M."/>
            <person name="Tang C.C."/>
            <person name="Onodera C.S."/>
            <person name="Deng J.M."/>
            <person name="Akiyama K."/>
            <person name="Ansari Y."/>
            <person name="Arakawa T."/>
            <person name="Banh J."/>
            <person name="Banno F."/>
            <person name="Bowser L."/>
            <person name="Brooks S.Y."/>
            <person name="Carninci P."/>
            <person name="Chao Q."/>
            <person name="Choy N."/>
            <person name="Enju A."/>
            <person name="Goldsmith A.D."/>
            <person name="Gurjal M."/>
            <person name="Hansen N.F."/>
            <person name="Hayashizaki Y."/>
            <person name="Johnson-Hopson C."/>
            <person name="Hsuan V.W."/>
            <person name="Iida K."/>
            <person name="Karnes M."/>
            <person name="Khan S."/>
            <person name="Koesema E."/>
            <person name="Ishida J."/>
            <person name="Jiang P.X."/>
            <person name="Jones T."/>
            <person name="Kawai J."/>
            <person name="Kamiya A."/>
            <person name="Meyers C."/>
            <person name="Nakajima M."/>
            <person name="Narusaka M."/>
            <person name="Seki M."/>
            <person name="Sakurai T."/>
            <person name="Satou M."/>
            <person name="Tamse R."/>
            <person name="Vaysberg M."/>
            <person name="Wallender E.K."/>
            <person name="Wong C."/>
            <person name="Yamamura Y."/>
            <person name="Yuan S."/>
            <person name="Shinozaki K."/>
            <person name="Davis R.W."/>
            <person name="Theologis A."/>
            <person name="Ecker J.R."/>
        </authorList>
    </citation>
    <scope>NUCLEOTIDE SEQUENCE [LARGE SCALE MRNA]</scope>
    <source>
        <strain>cv. Columbia</strain>
    </source>
</reference>
<reference key="6">
    <citation type="journal article" date="2007" name="Plant J.">
        <title>Ubiquitin C-terminal hydrolases 1 and 2 affect shoot architecture in Arabidopsis.</title>
        <authorList>
            <person name="Yang P."/>
            <person name="Smalle J."/>
            <person name="Lee S."/>
            <person name="Yan N."/>
            <person name="Emborg T.J."/>
            <person name="Vierstra R.D."/>
        </authorList>
    </citation>
    <scope>GENE FAMILY</scope>
    <scope>NOMENCLATURE</scope>
</reference>
<name>UCH3_ARATH</name>
<organism evidence="6">
    <name type="scientific">Arabidopsis thaliana</name>
    <name type="common">Mouse-ear cress</name>
    <dbReference type="NCBI Taxonomy" id="3702"/>
    <lineage>
        <taxon>Eukaryota</taxon>
        <taxon>Viridiplantae</taxon>
        <taxon>Streptophyta</taxon>
        <taxon>Embryophyta</taxon>
        <taxon>Tracheophyta</taxon>
        <taxon>Spermatophyta</taxon>
        <taxon>Magnoliopsida</taxon>
        <taxon>eudicotyledons</taxon>
        <taxon>Gunneridae</taxon>
        <taxon>Pentapetalae</taxon>
        <taxon>rosids</taxon>
        <taxon>malvids</taxon>
        <taxon>Brassicales</taxon>
        <taxon>Brassicaceae</taxon>
        <taxon>Camelineae</taxon>
        <taxon>Arabidopsis</taxon>
    </lineage>
</organism>
<comment type="catalytic activity">
    <reaction evidence="3">
        <text>Thiol-dependent hydrolysis of ester, thioester, amide, peptide and isopeptide bonds formed by the C-terminal Gly of ubiquitin (a 76-residue protein attached to proteins as an intracellular targeting signal).</text>
        <dbReference type="EC" id="3.4.19.12"/>
    </reaction>
</comment>
<comment type="similarity">
    <text evidence="3">Belongs to the peptidase C12 family.</text>
</comment>
<comment type="sequence caution" evidence="3">
    <conflict type="erroneous gene model prediction">
        <sequence resource="EMBL-CDS" id="CAB10531"/>
    </conflict>
</comment>
<comment type="sequence caution" evidence="3">
    <conflict type="erroneous gene model prediction">
        <sequence resource="EMBL-CDS" id="CAB78754"/>
    </conflict>
</comment>
<evidence type="ECO:0000255" key="1">
    <source>
        <dbReference type="PROSITE-ProRule" id="PRU01393"/>
    </source>
</evidence>
<evidence type="ECO:0000303" key="2">
    <source>
    </source>
</evidence>
<evidence type="ECO:0000305" key="3"/>
<evidence type="ECO:0000312" key="4">
    <source>
        <dbReference type="Araport" id="AT4G17510"/>
    </source>
</evidence>
<evidence type="ECO:0000312" key="5">
    <source>
        <dbReference type="EMBL" id="AEE83905.1"/>
    </source>
</evidence>
<evidence type="ECO:0000312" key="6">
    <source>
        <dbReference type="EMBL" id="BAC43488.1"/>
    </source>
</evidence>
<evidence type="ECO:0000312" key="7">
    <source>
        <dbReference type="EMBL" id="CAB10531.1"/>
    </source>
</evidence>
<accession>Q8GWE1</accession>
<accession>O23592</accession>
<dbReference type="EC" id="3.4.19.12" evidence="3"/>
<dbReference type="EMBL" id="Z97343">
    <property type="protein sequence ID" value="CAB10531.1"/>
    <property type="status" value="ALT_SEQ"/>
    <property type="molecule type" value="Genomic_DNA"/>
</dbReference>
<dbReference type="EMBL" id="AL161546">
    <property type="protein sequence ID" value="CAB78754.1"/>
    <property type="status" value="ALT_SEQ"/>
    <property type="molecule type" value="Genomic_DNA"/>
</dbReference>
<dbReference type="EMBL" id="CP002687">
    <property type="protein sequence ID" value="AEE83905.1"/>
    <property type="molecule type" value="Genomic_DNA"/>
</dbReference>
<dbReference type="EMBL" id="AK118904">
    <property type="protein sequence ID" value="BAC43488.1"/>
    <property type="molecule type" value="mRNA"/>
</dbReference>
<dbReference type="EMBL" id="BT005488">
    <property type="protein sequence ID" value="AAO63908.1"/>
    <property type="molecule type" value="mRNA"/>
</dbReference>
<dbReference type="PIR" id="F71444">
    <property type="entry name" value="F71444"/>
</dbReference>
<dbReference type="RefSeq" id="NP_193484.1">
    <property type="nucleotide sequence ID" value="NM_117857.3"/>
</dbReference>
<dbReference type="SMR" id="Q8GWE1"/>
<dbReference type="FunCoup" id="Q8GWE1">
    <property type="interactions" value="2804"/>
</dbReference>
<dbReference type="IntAct" id="Q8GWE1">
    <property type="interactions" value="2"/>
</dbReference>
<dbReference type="STRING" id="3702.Q8GWE1"/>
<dbReference type="MEROPS" id="C12.A03"/>
<dbReference type="MetOSite" id="Q8GWE1"/>
<dbReference type="PaxDb" id="3702-AT4G17510.1"/>
<dbReference type="ProteomicsDB" id="243221"/>
<dbReference type="EnsemblPlants" id="AT4G17510.1">
    <property type="protein sequence ID" value="AT4G17510.1"/>
    <property type="gene ID" value="AT4G17510"/>
</dbReference>
<dbReference type="GeneID" id="827466"/>
<dbReference type="Gramene" id="AT4G17510.1">
    <property type="protein sequence ID" value="AT4G17510.1"/>
    <property type="gene ID" value="AT4G17510"/>
</dbReference>
<dbReference type="KEGG" id="ath:AT4G17510"/>
<dbReference type="Araport" id="AT4G17510"/>
<dbReference type="TAIR" id="AT4G17510">
    <property type="gene designation" value="UCH3"/>
</dbReference>
<dbReference type="eggNOG" id="KOG1415">
    <property type="taxonomic scope" value="Eukaryota"/>
</dbReference>
<dbReference type="HOGENOM" id="CLU_054406_1_1_1"/>
<dbReference type="InParanoid" id="Q8GWE1"/>
<dbReference type="OMA" id="IDLHYVC"/>
<dbReference type="OrthoDB" id="427186at2759"/>
<dbReference type="PhylomeDB" id="Q8GWE1"/>
<dbReference type="PRO" id="PR:Q8GWE1"/>
<dbReference type="Proteomes" id="UP000006548">
    <property type="component" value="Chromosome 4"/>
</dbReference>
<dbReference type="ExpressionAtlas" id="Q8GWE1">
    <property type="expression patterns" value="baseline and differential"/>
</dbReference>
<dbReference type="GO" id="GO:0004843">
    <property type="term" value="F:cysteine-type deubiquitinase activity"/>
    <property type="evidence" value="ECO:0007669"/>
    <property type="project" value="UniProtKB-EC"/>
</dbReference>
<dbReference type="GO" id="GO:0006511">
    <property type="term" value="P:ubiquitin-dependent protein catabolic process"/>
    <property type="evidence" value="ECO:0007669"/>
    <property type="project" value="InterPro"/>
</dbReference>
<dbReference type="CDD" id="cd09616">
    <property type="entry name" value="Peptidase_C12_UCH_L1_L3"/>
    <property type="match status" value="1"/>
</dbReference>
<dbReference type="FunFam" id="3.40.532.10:FF:000007">
    <property type="entry name" value="Ubiquitin carboxyl-terminal hydrolase"/>
    <property type="match status" value="1"/>
</dbReference>
<dbReference type="Gene3D" id="3.40.532.10">
    <property type="entry name" value="Peptidase C12, ubiquitin carboxyl-terminal hydrolase"/>
    <property type="match status" value="1"/>
</dbReference>
<dbReference type="InterPro" id="IPR038765">
    <property type="entry name" value="Papain-like_cys_pep_sf"/>
</dbReference>
<dbReference type="InterPro" id="IPR001578">
    <property type="entry name" value="Peptidase_C12_UCH"/>
</dbReference>
<dbReference type="InterPro" id="IPR036959">
    <property type="entry name" value="Peptidase_C12_UCH_sf"/>
</dbReference>
<dbReference type="PANTHER" id="PTHR10589">
    <property type="entry name" value="UBIQUITIN CARBOXYL-TERMINAL HYDROLASE"/>
    <property type="match status" value="1"/>
</dbReference>
<dbReference type="PANTHER" id="PTHR10589:SF17">
    <property type="entry name" value="UBIQUITIN CARBOXYL-TERMINAL HYDROLASE"/>
    <property type="match status" value="1"/>
</dbReference>
<dbReference type="Pfam" id="PF01088">
    <property type="entry name" value="Peptidase_C12"/>
    <property type="match status" value="1"/>
</dbReference>
<dbReference type="PRINTS" id="PR00707">
    <property type="entry name" value="UBCTHYDRLASE"/>
</dbReference>
<dbReference type="SUPFAM" id="SSF54001">
    <property type="entry name" value="Cysteine proteinases"/>
    <property type="match status" value="1"/>
</dbReference>
<dbReference type="PROSITE" id="PS52048">
    <property type="entry name" value="UCH_DOMAIN"/>
    <property type="match status" value="1"/>
</dbReference>
<proteinExistence type="evidence at transcript level"/>